<organism>
    <name type="scientific">Koribacter versatilis (strain Ellin345)</name>
    <dbReference type="NCBI Taxonomy" id="204669"/>
    <lineage>
        <taxon>Bacteria</taxon>
        <taxon>Pseudomonadati</taxon>
        <taxon>Acidobacteriota</taxon>
        <taxon>Terriglobia</taxon>
        <taxon>Terriglobales</taxon>
        <taxon>Candidatus Korobacteraceae</taxon>
        <taxon>Candidatus Korobacter</taxon>
    </lineage>
</organism>
<dbReference type="EC" id="4.2.3.5" evidence="1"/>
<dbReference type="EMBL" id="CP000360">
    <property type="protein sequence ID" value="ABF43288.1"/>
    <property type="molecule type" value="Genomic_DNA"/>
</dbReference>
<dbReference type="RefSeq" id="WP_011525085.1">
    <property type="nucleotide sequence ID" value="NC_008009.1"/>
</dbReference>
<dbReference type="SMR" id="Q1IIL2"/>
<dbReference type="STRING" id="204669.Acid345_4288"/>
<dbReference type="EnsemblBacteria" id="ABF43288">
    <property type="protein sequence ID" value="ABF43288"/>
    <property type="gene ID" value="Acid345_4288"/>
</dbReference>
<dbReference type="KEGG" id="aba:Acid345_4288"/>
<dbReference type="eggNOG" id="COG0082">
    <property type="taxonomic scope" value="Bacteria"/>
</dbReference>
<dbReference type="HOGENOM" id="CLU_034547_2_0_0"/>
<dbReference type="OrthoDB" id="9771806at2"/>
<dbReference type="UniPathway" id="UPA00053">
    <property type="reaction ID" value="UER00090"/>
</dbReference>
<dbReference type="Proteomes" id="UP000002432">
    <property type="component" value="Chromosome"/>
</dbReference>
<dbReference type="GO" id="GO:0005829">
    <property type="term" value="C:cytosol"/>
    <property type="evidence" value="ECO:0007669"/>
    <property type="project" value="TreeGrafter"/>
</dbReference>
<dbReference type="GO" id="GO:0004107">
    <property type="term" value="F:chorismate synthase activity"/>
    <property type="evidence" value="ECO:0007669"/>
    <property type="project" value="UniProtKB-UniRule"/>
</dbReference>
<dbReference type="GO" id="GO:0010181">
    <property type="term" value="F:FMN binding"/>
    <property type="evidence" value="ECO:0007669"/>
    <property type="project" value="TreeGrafter"/>
</dbReference>
<dbReference type="GO" id="GO:0008652">
    <property type="term" value="P:amino acid biosynthetic process"/>
    <property type="evidence" value="ECO:0007669"/>
    <property type="project" value="UniProtKB-KW"/>
</dbReference>
<dbReference type="GO" id="GO:0009073">
    <property type="term" value="P:aromatic amino acid family biosynthetic process"/>
    <property type="evidence" value="ECO:0007669"/>
    <property type="project" value="UniProtKB-KW"/>
</dbReference>
<dbReference type="GO" id="GO:0009423">
    <property type="term" value="P:chorismate biosynthetic process"/>
    <property type="evidence" value="ECO:0007669"/>
    <property type="project" value="UniProtKB-UniRule"/>
</dbReference>
<dbReference type="CDD" id="cd07304">
    <property type="entry name" value="Chorismate_synthase"/>
    <property type="match status" value="1"/>
</dbReference>
<dbReference type="FunFam" id="3.60.150.10:FF:000002">
    <property type="entry name" value="Chorismate synthase"/>
    <property type="match status" value="1"/>
</dbReference>
<dbReference type="Gene3D" id="3.60.150.10">
    <property type="entry name" value="Chorismate synthase AroC"/>
    <property type="match status" value="1"/>
</dbReference>
<dbReference type="HAMAP" id="MF_00300">
    <property type="entry name" value="Chorismate_synth"/>
    <property type="match status" value="1"/>
</dbReference>
<dbReference type="InterPro" id="IPR000453">
    <property type="entry name" value="Chorismate_synth"/>
</dbReference>
<dbReference type="InterPro" id="IPR035904">
    <property type="entry name" value="Chorismate_synth_AroC_sf"/>
</dbReference>
<dbReference type="InterPro" id="IPR020541">
    <property type="entry name" value="Chorismate_synthase_CS"/>
</dbReference>
<dbReference type="NCBIfam" id="TIGR00033">
    <property type="entry name" value="aroC"/>
    <property type="match status" value="1"/>
</dbReference>
<dbReference type="NCBIfam" id="NF003793">
    <property type="entry name" value="PRK05382.1"/>
    <property type="match status" value="1"/>
</dbReference>
<dbReference type="PANTHER" id="PTHR21085">
    <property type="entry name" value="CHORISMATE SYNTHASE"/>
    <property type="match status" value="1"/>
</dbReference>
<dbReference type="PANTHER" id="PTHR21085:SF0">
    <property type="entry name" value="CHORISMATE SYNTHASE"/>
    <property type="match status" value="1"/>
</dbReference>
<dbReference type="Pfam" id="PF01264">
    <property type="entry name" value="Chorismate_synt"/>
    <property type="match status" value="1"/>
</dbReference>
<dbReference type="PIRSF" id="PIRSF001456">
    <property type="entry name" value="Chorismate_synth"/>
    <property type="match status" value="1"/>
</dbReference>
<dbReference type="SUPFAM" id="SSF103263">
    <property type="entry name" value="Chorismate synthase, AroC"/>
    <property type="match status" value="1"/>
</dbReference>
<dbReference type="PROSITE" id="PS00787">
    <property type="entry name" value="CHORISMATE_SYNTHASE_1"/>
    <property type="match status" value="1"/>
</dbReference>
<dbReference type="PROSITE" id="PS00788">
    <property type="entry name" value="CHORISMATE_SYNTHASE_2"/>
    <property type="match status" value="1"/>
</dbReference>
<name>AROC_KORVE</name>
<accession>Q1IIL2</accession>
<keyword id="KW-0028">Amino-acid biosynthesis</keyword>
<keyword id="KW-0057">Aromatic amino acid biosynthesis</keyword>
<keyword id="KW-0274">FAD</keyword>
<keyword id="KW-0285">Flavoprotein</keyword>
<keyword id="KW-0288">FMN</keyword>
<keyword id="KW-0456">Lyase</keyword>
<keyword id="KW-0521">NADP</keyword>
<keyword id="KW-1185">Reference proteome</keyword>
<proteinExistence type="inferred from homology"/>
<gene>
    <name evidence="1" type="primary">aroC</name>
    <name type="ordered locus">Acid345_4288</name>
</gene>
<evidence type="ECO:0000255" key="1">
    <source>
        <dbReference type="HAMAP-Rule" id="MF_00300"/>
    </source>
</evidence>
<protein>
    <recommendedName>
        <fullName evidence="1">Chorismate synthase</fullName>
        <shortName evidence="1">CS</shortName>
        <ecNumber evidence="1">4.2.3.5</ecNumber>
    </recommendedName>
    <alternativeName>
        <fullName evidence="1">5-enolpyruvylshikimate-3-phosphate phospholyase</fullName>
    </alternativeName>
</protein>
<comment type="function">
    <text evidence="1">Catalyzes the anti-1,4-elimination of the C-3 phosphate and the C-6 proR hydrogen from 5-enolpyruvylshikimate-3-phosphate (EPSP) to yield chorismate, which is the branch point compound that serves as the starting substrate for the three terminal pathways of aromatic amino acid biosynthesis. This reaction introduces a second double bond into the aromatic ring system.</text>
</comment>
<comment type="catalytic activity">
    <reaction evidence="1">
        <text>5-O-(1-carboxyvinyl)-3-phosphoshikimate = chorismate + phosphate</text>
        <dbReference type="Rhea" id="RHEA:21020"/>
        <dbReference type="ChEBI" id="CHEBI:29748"/>
        <dbReference type="ChEBI" id="CHEBI:43474"/>
        <dbReference type="ChEBI" id="CHEBI:57701"/>
        <dbReference type="EC" id="4.2.3.5"/>
    </reaction>
</comment>
<comment type="cofactor">
    <cofactor evidence="1">
        <name>FMNH2</name>
        <dbReference type="ChEBI" id="CHEBI:57618"/>
    </cofactor>
    <text evidence="1">Reduced FMN (FMNH(2)).</text>
</comment>
<comment type="pathway">
    <text evidence="1">Metabolic intermediate biosynthesis; chorismate biosynthesis; chorismate from D-erythrose 4-phosphate and phosphoenolpyruvate: step 7/7.</text>
</comment>
<comment type="subunit">
    <text evidence="1">Homotetramer.</text>
</comment>
<comment type="similarity">
    <text evidence="1">Belongs to the chorismate synthase family.</text>
</comment>
<sequence>MLRFQTAGESHGEALVATLTGVPAGLPIDQAFLDRELWRRQQGFGRGGRMKIERDTAHILSGVHHGKTIGSPIAILIRNNDWKNWQESLPVEEGDSAKHKPVKSPRPGHADLAGALKYNFPEARYVLERASARETTARVAAGAIAKLLLRQIGADVLSHVIAVGTARLENTEVQWEKLVELAQRDNVLLGCVDPEAEQRMKEQVDQVLRTGDTVGGVFEVVAHNLPPGLGTYVEWDRRLDGLLAMAVMSLQAVKAVEIGEGVSVAATFGSGAQDEIGYEREHESKFTGFTRTSNHAGGIEGGVSNGQDILVRGYLKPISTLRRPLGSVDFATREPLKAAYERSDVCVVPAAGIAAEAMVAITLAGCALEKFGGDSLVEFKRNYEGYCQQLQSF</sequence>
<feature type="chain" id="PRO_0000322379" description="Chorismate synthase">
    <location>
        <begin position="1"/>
        <end position="393"/>
    </location>
</feature>
<feature type="binding site" evidence="1">
    <location>
        <position position="40"/>
    </location>
    <ligand>
        <name>NADP(+)</name>
        <dbReference type="ChEBI" id="CHEBI:58349"/>
    </ligand>
</feature>
<feature type="binding site" evidence="1">
    <location>
        <position position="46"/>
    </location>
    <ligand>
        <name>NADP(+)</name>
        <dbReference type="ChEBI" id="CHEBI:58349"/>
    </ligand>
</feature>
<feature type="binding site" evidence="1">
    <location>
        <begin position="129"/>
        <end position="131"/>
    </location>
    <ligand>
        <name>FMN</name>
        <dbReference type="ChEBI" id="CHEBI:58210"/>
    </ligand>
</feature>
<feature type="binding site" evidence="1">
    <location>
        <begin position="251"/>
        <end position="252"/>
    </location>
    <ligand>
        <name>FMN</name>
        <dbReference type="ChEBI" id="CHEBI:58210"/>
    </ligand>
</feature>
<feature type="binding site" evidence="1">
    <location>
        <position position="301"/>
    </location>
    <ligand>
        <name>FMN</name>
        <dbReference type="ChEBI" id="CHEBI:58210"/>
    </ligand>
</feature>
<feature type="binding site" evidence="1">
    <location>
        <begin position="316"/>
        <end position="320"/>
    </location>
    <ligand>
        <name>FMN</name>
        <dbReference type="ChEBI" id="CHEBI:58210"/>
    </ligand>
</feature>
<feature type="binding site" evidence="1">
    <location>
        <position position="342"/>
    </location>
    <ligand>
        <name>FMN</name>
        <dbReference type="ChEBI" id="CHEBI:58210"/>
    </ligand>
</feature>
<reference key="1">
    <citation type="journal article" date="2009" name="Appl. Environ. Microbiol.">
        <title>Three genomes from the phylum Acidobacteria provide insight into the lifestyles of these microorganisms in soils.</title>
        <authorList>
            <person name="Ward N.L."/>
            <person name="Challacombe J.F."/>
            <person name="Janssen P.H."/>
            <person name="Henrissat B."/>
            <person name="Coutinho P.M."/>
            <person name="Wu M."/>
            <person name="Xie G."/>
            <person name="Haft D.H."/>
            <person name="Sait M."/>
            <person name="Badger J."/>
            <person name="Barabote R.D."/>
            <person name="Bradley B."/>
            <person name="Brettin T.S."/>
            <person name="Brinkac L.M."/>
            <person name="Bruce D."/>
            <person name="Creasy T."/>
            <person name="Daugherty S.C."/>
            <person name="Davidsen T.M."/>
            <person name="DeBoy R.T."/>
            <person name="Detter J.C."/>
            <person name="Dodson R.J."/>
            <person name="Durkin A.S."/>
            <person name="Ganapathy A."/>
            <person name="Gwinn-Giglio M."/>
            <person name="Han C.S."/>
            <person name="Khouri H."/>
            <person name="Kiss H."/>
            <person name="Kothari S.P."/>
            <person name="Madupu R."/>
            <person name="Nelson K.E."/>
            <person name="Nelson W.C."/>
            <person name="Paulsen I."/>
            <person name="Penn K."/>
            <person name="Ren Q."/>
            <person name="Rosovitz M.J."/>
            <person name="Selengut J.D."/>
            <person name="Shrivastava S."/>
            <person name="Sullivan S.A."/>
            <person name="Tapia R."/>
            <person name="Thompson L.S."/>
            <person name="Watkins K.L."/>
            <person name="Yang Q."/>
            <person name="Yu C."/>
            <person name="Zafar N."/>
            <person name="Zhou L."/>
            <person name="Kuske C.R."/>
        </authorList>
    </citation>
    <scope>NUCLEOTIDE SEQUENCE [LARGE SCALE GENOMIC DNA]</scope>
    <source>
        <strain>Ellin345</strain>
    </source>
</reference>